<reference key="1">
    <citation type="journal article" date="1995" name="Biochim. Biophys. Acta">
        <title>Cloning and characterization of full-length cDNAs coding for the DNA topoisomerase II beta from Chinese hamster lung cells sensitive and resistant 9-OH-ellipticine.</title>
        <authorList>
            <person name="Dereuddre S."/>
            <person name="Frey S."/>
            <person name="Delaporte C."/>
            <person name="Jacquemin-Sablon A."/>
        </authorList>
    </citation>
    <scope>NUCLEOTIDE SEQUENCE [MRNA]</scope>
    <source>
        <tissue>Lung</tissue>
    </source>
</reference>
<feature type="initiator methionine" description="Removed" evidence="3">
    <location>
        <position position="1"/>
    </location>
</feature>
<feature type="chain" id="PRO_0000145368" description="DNA topoisomerase 2-beta">
    <location>
        <begin position="2"/>
        <end position="1612"/>
    </location>
</feature>
<feature type="domain" description="Toprim" evidence="4">
    <location>
        <begin position="464"/>
        <end position="581"/>
    </location>
</feature>
<feature type="domain" description="Topo IIA-type catalytic" evidence="5">
    <location>
        <begin position="724"/>
        <end position="1177"/>
    </location>
</feature>
<feature type="region of interest" description="Interaction with DNA" evidence="1">
    <location>
        <begin position="351"/>
        <end position="353"/>
    </location>
</feature>
<feature type="region of interest" description="Interaction with DNA" evidence="1">
    <location>
        <begin position="999"/>
        <end position="1008"/>
    </location>
</feature>
<feature type="region of interest" description="Disordered" evidence="6">
    <location>
        <begin position="1098"/>
        <end position="1128"/>
    </location>
</feature>
<feature type="region of interest" description="Disordered" evidence="6">
    <location>
        <begin position="1245"/>
        <end position="1586"/>
    </location>
</feature>
<feature type="region of interest" description="Interaction with PLSCR1" evidence="2">
    <location>
        <begin position="1493"/>
        <end position="1499"/>
    </location>
</feature>
<feature type="compositionally biased region" description="Basic and acidic residues" evidence="6">
    <location>
        <begin position="1322"/>
        <end position="1332"/>
    </location>
</feature>
<feature type="compositionally biased region" description="Basic and acidic residues" evidence="6">
    <location>
        <begin position="1346"/>
        <end position="1358"/>
    </location>
</feature>
<feature type="compositionally biased region" description="Acidic residues" evidence="6">
    <location>
        <begin position="1362"/>
        <end position="1379"/>
    </location>
</feature>
<feature type="compositionally biased region" description="Basic and acidic residues" evidence="6">
    <location>
        <begin position="1417"/>
        <end position="1429"/>
    </location>
</feature>
<feature type="compositionally biased region" description="Basic and acidic residues" evidence="6">
    <location>
        <begin position="1443"/>
        <end position="1453"/>
    </location>
</feature>
<feature type="compositionally biased region" description="Basic residues" evidence="6">
    <location>
        <begin position="1526"/>
        <end position="1536"/>
    </location>
</feature>
<feature type="compositionally biased region" description="Basic residues" evidence="6">
    <location>
        <begin position="1550"/>
        <end position="1561"/>
    </location>
</feature>
<feature type="active site" description="O-(5'-phospho-DNA)-tyrosine intermediate" evidence="5">
    <location>
        <position position="814"/>
    </location>
</feature>
<feature type="binding site" evidence="1">
    <location>
        <position position="100"/>
    </location>
    <ligand>
        <name>ATP</name>
        <dbReference type="ChEBI" id="CHEBI:30616"/>
    </ligand>
</feature>
<feature type="binding site" evidence="1">
    <location>
        <position position="129"/>
    </location>
    <ligand>
        <name>ATP</name>
        <dbReference type="ChEBI" id="CHEBI:30616"/>
    </ligand>
</feature>
<feature type="binding site" evidence="1">
    <location>
        <begin position="157"/>
        <end position="159"/>
    </location>
    <ligand>
        <name>ATP</name>
        <dbReference type="ChEBI" id="CHEBI:30616"/>
    </ligand>
</feature>
<feature type="binding site" evidence="1">
    <location>
        <begin position="170"/>
        <end position="177"/>
    </location>
    <ligand>
        <name>ATP</name>
        <dbReference type="ChEBI" id="CHEBI:30616"/>
    </ligand>
</feature>
<feature type="binding site" evidence="1">
    <location>
        <begin position="385"/>
        <end position="387"/>
    </location>
    <ligand>
        <name>ATP</name>
        <dbReference type="ChEBI" id="CHEBI:30616"/>
    </ligand>
</feature>
<feature type="binding site" evidence="4">
    <location>
        <position position="470"/>
    </location>
    <ligand>
        <name>Mg(2+)</name>
        <dbReference type="ChEBI" id="CHEBI:18420"/>
        <label>1</label>
        <note>catalytic</note>
    </ligand>
</feature>
<feature type="binding site" evidence="4">
    <location>
        <position position="550"/>
    </location>
    <ligand>
        <name>Mg(2+)</name>
        <dbReference type="ChEBI" id="CHEBI:18420"/>
        <label>1</label>
        <note>catalytic</note>
    </ligand>
</feature>
<feature type="binding site" evidence="4">
    <location>
        <position position="550"/>
    </location>
    <ligand>
        <name>Mg(2+)</name>
        <dbReference type="ChEBI" id="CHEBI:18420"/>
        <label>2</label>
    </ligand>
</feature>
<feature type="binding site" evidence="4">
    <location>
        <position position="552"/>
    </location>
    <ligand>
        <name>Mg(2+)</name>
        <dbReference type="ChEBI" id="CHEBI:18420"/>
        <label>2</label>
    </ligand>
</feature>
<feature type="site" description="Interaction with DNA" evidence="4">
    <location>
        <position position="498"/>
    </location>
</feature>
<feature type="site" description="Interaction with DNA" evidence="4">
    <location>
        <position position="501"/>
    </location>
</feature>
<feature type="site" description="Interaction with DNA" evidence="4">
    <location>
        <position position="670"/>
    </location>
</feature>
<feature type="site" description="Interaction with DNA" evidence="4">
    <location>
        <position position="671"/>
    </location>
</feature>
<feature type="site" description="Interaction with DNA" evidence="4">
    <location>
        <position position="732"/>
    </location>
</feature>
<feature type="site" description="Interaction with DNA" evidence="4">
    <location>
        <position position="766"/>
    </location>
</feature>
<feature type="site" description="Transition state stabilizer" evidence="1">
    <location>
        <position position="813"/>
    </location>
</feature>
<feature type="site" description="Important for DNA bending; intercalates between base pairs of target DNA" evidence="1">
    <location>
        <position position="865"/>
    </location>
</feature>
<feature type="site" description="Interaction with DNA" evidence="4">
    <location>
        <position position="940"/>
    </location>
</feature>
<feature type="modified residue" description="N-acetylalanine" evidence="3">
    <location>
        <position position="2"/>
    </location>
</feature>
<feature type="modified residue" description="N6-acetyllysine" evidence="3">
    <location>
        <position position="3"/>
    </location>
</feature>
<feature type="modified residue" description="Phosphoserine" evidence="2">
    <location>
        <position position="1224"/>
    </location>
</feature>
<feature type="modified residue" description="Phosphothreonine" evidence="2">
    <location>
        <position position="1280"/>
    </location>
</feature>
<feature type="modified residue" description="Phosphoserine" evidence="2">
    <location>
        <position position="1324"/>
    </location>
</feature>
<feature type="modified residue" description="Phosphoserine" evidence="2">
    <location>
        <position position="1328"/>
    </location>
</feature>
<feature type="modified residue" description="Phosphoserine" evidence="2">
    <location>
        <position position="1330"/>
    </location>
</feature>
<feature type="modified residue" description="Phosphoserine" evidence="2">
    <location>
        <position position="1332"/>
    </location>
</feature>
<feature type="modified residue" description="Phosphoserine" evidence="2">
    <location>
        <position position="1346"/>
    </location>
</feature>
<feature type="modified residue" description="Phosphotyrosine" evidence="3">
    <location>
        <position position="1358"/>
    </location>
</feature>
<feature type="modified residue" description="Phosphoserine" evidence="2">
    <location>
        <position position="1363"/>
    </location>
</feature>
<feature type="modified residue" description="Phosphoserine" evidence="2">
    <location>
        <position position="1387"/>
    </location>
</feature>
<feature type="modified residue" description="Phosphothreonine" evidence="2">
    <location>
        <position position="1390"/>
    </location>
</feature>
<feature type="modified residue" description="Phosphoserine" evidence="2">
    <location>
        <position position="1400"/>
    </location>
</feature>
<feature type="modified residue" description="Phosphotyrosine" evidence="2">
    <location>
        <position position="1408"/>
    </location>
</feature>
<feature type="modified residue" description="Phosphoserine" evidence="2">
    <location>
        <position position="1411"/>
    </location>
</feature>
<feature type="modified residue" description="Phosphoserine" evidence="2">
    <location>
        <position position="1428"/>
    </location>
</feature>
<feature type="modified residue" description="Phosphoserine" evidence="2">
    <location>
        <position position="1439"/>
    </location>
</feature>
<feature type="modified residue" description="Phosphoserine" evidence="2">
    <location>
        <position position="1441"/>
    </location>
</feature>
<feature type="modified residue" description="Phosphoserine" evidence="2">
    <location>
        <position position="1448"/>
    </location>
</feature>
<feature type="modified residue" description="Phosphoserine" evidence="2">
    <location>
        <position position="1453"/>
    </location>
</feature>
<feature type="modified residue" description="Phosphoserine" evidence="2">
    <location>
        <position position="1460"/>
    </location>
</feature>
<feature type="modified residue" description="Phosphoserine" evidence="2">
    <location>
        <position position="1509"/>
    </location>
</feature>
<feature type="modified residue" description="Phosphoserine" evidence="2">
    <location>
        <position position="1511"/>
    </location>
</feature>
<feature type="modified residue" description="Phosphoserine" evidence="2">
    <location>
        <position position="1513"/>
    </location>
</feature>
<feature type="modified residue" description="Phosphoserine" evidence="2">
    <location>
        <position position="1537"/>
    </location>
</feature>
<feature type="modified residue" description="Phosphoserine" evidence="2">
    <location>
        <position position="1539"/>
    </location>
</feature>
<feature type="modified residue" description="Phosphothreonine" evidence="2">
    <location>
        <position position="1562"/>
    </location>
</feature>
<feature type="modified residue" description="Phosphoserine" evidence="2">
    <location>
        <position position="1563"/>
    </location>
</feature>
<feature type="modified residue" description="Phosphoserine" evidence="2">
    <location>
        <position position="1568"/>
    </location>
</feature>
<feature type="modified residue" description="Phosphotyrosine" evidence="2">
    <location>
        <position position="1596"/>
    </location>
</feature>
<feature type="modified residue" description="Phosphoserine" evidence="2">
    <location>
        <position position="1600"/>
    </location>
</feature>
<feature type="cross-link" description="Glycyl lysine isopeptide (Lys-Gly) (interchain with G-Cter in SUMO2)" evidence="2">
    <location>
        <position position="21"/>
    </location>
</feature>
<feature type="cross-link" description="Glycyl lysine isopeptide (Lys-Gly) (interchain with G-Cter in SUMO2)" evidence="2">
    <location>
        <position position="22"/>
    </location>
</feature>
<feature type="cross-link" description="Glycyl lysine isopeptide (Lys-Gly) (interchain with G-Cter in SUMO2)" evidence="2">
    <location>
        <position position="165"/>
    </location>
</feature>
<feature type="cross-link" description="Glycyl lysine isopeptide (Lys-Gly) (interchain with G-Cter in SUMO2)" evidence="2">
    <location>
        <position position="166"/>
    </location>
</feature>
<feature type="cross-link" description="Glycyl lysine isopeptide (Lys-Gly) (interchain with G-Cter in SUMO2)" evidence="2">
    <location>
        <position position="216"/>
    </location>
</feature>
<feature type="cross-link" description="Glycyl lysine isopeptide (Lys-Gly) (interchain with G-Cter in SUMO2)" evidence="2">
    <location>
        <position position="287"/>
    </location>
</feature>
<feature type="cross-link" description="Glycyl lysine isopeptide (Lys-Gly) (interchain with G-Cter in SUMO2)" evidence="2">
    <location>
        <position position="355"/>
    </location>
</feature>
<feature type="cross-link" description="Glycyl lysine isopeptide (Lys-Gly) (interchain with G-Cter in SUMO2)" evidence="2">
    <location>
        <position position="361"/>
    </location>
</feature>
<feature type="cross-link" description="Glycyl lysine isopeptide (Lys-Gly) (interchain with G-Cter in SUMO2)" evidence="2">
    <location>
        <position position="425"/>
    </location>
</feature>
<feature type="cross-link" description="Glycyl lysine isopeptide (Lys-Gly) (interchain with G-Cter in SUMO2)" evidence="2">
    <location>
        <position position="427"/>
    </location>
</feature>
<feature type="cross-link" description="Glycyl lysine isopeptide (Lys-Gly) (interchain with G-Cter in SUMO2)" evidence="2">
    <location>
        <position position="434"/>
    </location>
</feature>
<feature type="cross-link" description="Glycyl lysine isopeptide (Lys-Gly) (interchain with G-Cter in SUMO2)" evidence="2">
    <location>
        <position position="588"/>
    </location>
</feature>
<feature type="cross-link" description="Glycyl lysine isopeptide (Lys-Gly) (interchain with G-Cter in SUMO2)" evidence="2">
    <location>
        <position position="593"/>
    </location>
</feature>
<feature type="cross-link" description="Glycyl lysine isopeptide (Lys-Gly) (interchain with G-Cter in SUMO2)" evidence="2">
    <location>
        <position position="623"/>
    </location>
</feature>
<feature type="cross-link" description="Glycyl lysine isopeptide (Lys-Gly) (interchain with G-Cter in SUMO2)" evidence="2">
    <location>
        <position position="631"/>
    </location>
</feature>
<feature type="cross-link" description="Glycyl lysine isopeptide (Lys-Gly) (interchain with G-Cter in SUMO2)" evidence="2">
    <location>
        <position position="634"/>
    </location>
</feature>
<feature type="cross-link" description="Glycyl lysine isopeptide (Lys-Gly) (interchain with G-Cter in SUMO2)" evidence="2">
    <location>
        <position position="664"/>
    </location>
</feature>
<feature type="cross-link" description="Glycyl lysine isopeptide (Lys-Gly) (interchain with G-Cter in SUMO2)" evidence="2">
    <location>
        <position position="700"/>
    </location>
</feature>
<feature type="cross-link" description="Glycyl lysine isopeptide (Lys-Gly) (interchain with G-Cter in SUMO2)" evidence="2">
    <location>
        <position position="1080"/>
    </location>
</feature>
<feature type="cross-link" description="Glycyl lysine isopeptide (Lys-Gly) (interchain with G-Cter in SUMO2)" evidence="2">
    <location>
        <position position="1202"/>
    </location>
</feature>
<feature type="cross-link" description="Glycyl lysine isopeptide (Lys-Gly) (interchain with G-Cter in SUMO2)" evidence="2">
    <location>
        <position position="1205"/>
    </location>
</feature>
<feature type="cross-link" description="Glycyl lysine isopeptide (Lys-Gly) (interchain with G-Cter in SUMO2)" evidence="2">
    <location>
        <position position="1214"/>
    </location>
</feature>
<feature type="cross-link" description="Glycyl lysine isopeptide (Lys-Gly) (interchain with G-Cter in SUMO2)" evidence="2">
    <location>
        <position position="1215"/>
    </location>
</feature>
<feature type="cross-link" description="Glycyl lysine isopeptide (Lys-Gly) (interchain with G-Cter in SUMO2)" evidence="2">
    <location>
        <position position="1238"/>
    </location>
</feature>
<feature type="cross-link" description="Glycyl lysine isopeptide (Lys-Gly) (interchain with G-Cter in SUMO2)" evidence="2">
    <location>
        <position position="1250"/>
    </location>
</feature>
<feature type="cross-link" description="Glycyl lysine isopeptide (Lys-Gly) (interchain with G-Cter in SUMO2)" evidence="2">
    <location>
        <position position="1259"/>
    </location>
</feature>
<feature type="cross-link" description="Glycyl lysine isopeptide (Lys-Gly) (interchain with G-Cter in SUMO2)" evidence="2">
    <location>
        <position position="1311"/>
    </location>
</feature>
<feature type="cross-link" description="Glycyl lysine isopeptide (Lys-Gly) (interchain with G-Cter in SUMO2)" evidence="2">
    <location>
        <position position="1315"/>
    </location>
</feature>
<feature type="cross-link" description="Glycyl lysine isopeptide (Lys-Gly) (interchain with G-Cter in SUMO2)" evidence="2">
    <location>
        <position position="1385"/>
    </location>
</feature>
<feature type="cross-link" description="Glycyl lysine isopeptide (Lys-Gly) (interchain with G-Cter in SUMO2)" evidence="2">
    <location>
        <position position="1427"/>
    </location>
</feature>
<feature type="cross-link" description="Glycyl lysine isopeptide (Lys-Gly) (interchain with G-Cter in SUMO2)" evidence="2">
    <location>
        <position position="1443"/>
    </location>
</feature>
<feature type="cross-link" description="Glycyl lysine isopeptide (Lys-Gly) (interchain with G-Cter in SUMO2)" evidence="2">
    <location>
        <position position="1477"/>
    </location>
</feature>
<dbReference type="EC" id="5.6.2.2" evidence="4"/>
<dbReference type="EMBL" id="X86455">
    <property type="protein sequence ID" value="CAA60173.1"/>
    <property type="molecule type" value="mRNA"/>
</dbReference>
<dbReference type="SMR" id="Q64399"/>
<dbReference type="GO" id="GO:0005730">
    <property type="term" value="C:nucleolus"/>
    <property type="evidence" value="ECO:0000250"/>
    <property type="project" value="UniProtKB"/>
</dbReference>
<dbReference type="GO" id="GO:0005654">
    <property type="term" value="C:nucleoplasm"/>
    <property type="evidence" value="ECO:0007669"/>
    <property type="project" value="UniProtKB-SubCell"/>
</dbReference>
<dbReference type="GO" id="GO:0005634">
    <property type="term" value="C:nucleus"/>
    <property type="evidence" value="ECO:0000250"/>
    <property type="project" value="UniProtKB"/>
</dbReference>
<dbReference type="GO" id="GO:0005524">
    <property type="term" value="F:ATP binding"/>
    <property type="evidence" value="ECO:0007669"/>
    <property type="project" value="UniProtKB-KW"/>
</dbReference>
<dbReference type="GO" id="GO:0003677">
    <property type="term" value="F:DNA binding"/>
    <property type="evidence" value="ECO:0007669"/>
    <property type="project" value="UniProtKB-KW"/>
</dbReference>
<dbReference type="GO" id="GO:0003916">
    <property type="term" value="F:DNA topoisomerase activity"/>
    <property type="evidence" value="ECO:0000250"/>
    <property type="project" value="UniProtKB"/>
</dbReference>
<dbReference type="GO" id="GO:0003918">
    <property type="term" value="F:DNA topoisomerase type II (double strand cut, ATP-hydrolyzing) activity"/>
    <property type="evidence" value="ECO:0000250"/>
    <property type="project" value="UniProtKB"/>
</dbReference>
<dbReference type="GO" id="GO:0046872">
    <property type="term" value="F:metal ion binding"/>
    <property type="evidence" value="ECO:0007669"/>
    <property type="project" value="UniProtKB-KW"/>
</dbReference>
<dbReference type="GO" id="GO:0043021">
    <property type="term" value="F:ribonucleoprotein complex binding"/>
    <property type="evidence" value="ECO:0000250"/>
    <property type="project" value="UniProtKB"/>
</dbReference>
<dbReference type="GO" id="GO:0006265">
    <property type="term" value="P:DNA topological change"/>
    <property type="evidence" value="ECO:0000250"/>
    <property type="project" value="UniProtKB"/>
</dbReference>
<dbReference type="GO" id="GO:0000712">
    <property type="term" value="P:resolution of meiotic recombination intermediates"/>
    <property type="evidence" value="ECO:0007669"/>
    <property type="project" value="TreeGrafter"/>
</dbReference>
<dbReference type="GO" id="GO:0000819">
    <property type="term" value="P:sister chromatid segregation"/>
    <property type="evidence" value="ECO:0007669"/>
    <property type="project" value="TreeGrafter"/>
</dbReference>
<dbReference type="CDD" id="cd16930">
    <property type="entry name" value="HATPase_TopII-like"/>
    <property type="match status" value="1"/>
</dbReference>
<dbReference type="CDD" id="cd00187">
    <property type="entry name" value="TOP4c"/>
    <property type="match status" value="1"/>
</dbReference>
<dbReference type="CDD" id="cd03481">
    <property type="entry name" value="TopoIIA_Trans_ScTopoIIA"/>
    <property type="match status" value="1"/>
</dbReference>
<dbReference type="CDD" id="cd03365">
    <property type="entry name" value="TOPRIM_TopoIIA"/>
    <property type="match status" value="1"/>
</dbReference>
<dbReference type="FunFam" id="1.10.268.10:FF:000002">
    <property type="entry name" value="DNA topoisomerase 2"/>
    <property type="match status" value="1"/>
</dbReference>
<dbReference type="FunFam" id="3.30.1360.40:FF:000003">
    <property type="entry name" value="DNA topoisomerase 2"/>
    <property type="match status" value="1"/>
</dbReference>
<dbReference type="FunFam" id="3.30.1490.30:FF:000001">
    <property type="entry name" value="DNA topoisomerase 2"/>
    <property type="match status" value="1"/>
</dbReference>
<dbReference type="FunFam" id="3.30.230.10:FF:000008">
    <property type="entry name" value="DNA topoisomerase 2"/>
    <property type="match status" value="1"/>
</dbReference>
<dbReference type="FunFam" id="3.30.565.10:FF:000004">
    <property type="entry name" value="DNA topoisomerase 2"/>
    <property type="match status" value="1"/>
</dbReference>
<dbReference type="FunFam" id="3.40.50.670:FF:000001">
    <property type="entry name" value="DNA topoisomerase 2"/>
    <property type="match status" value="1"/>
</dbReference>
<dbReference type="FunFam" id="3.90.199.10:FF:000002">
    <property type="entry name" value="DNA topoisomerase 2"/>
    <property type="match status" value="1"/>
</dbReference>
<dbReference type="Gene3D" id="3.30.1360.40">
    <property type="match status" value="1"/>
</dbReference>
<dbReference type="Gene3D" id="3.30.1490.30">
    <property type="match status" value="1"/>
</dbReference>
<dbReference type="Gene3D" id="3.30.230.10">
    <property type="match status" value="1"/>
</dbReference>
<dbReference type="Gene3D" id="3.40.50.670">
    <property type="match status" value="1"/>
</dbReference>
<dbReference type="Gene3D" id="3.30.565.10">
    <property type="entry name" value="Histidine kinase-like ATPase, C-terminal domain"/>
    <property type="match status" value="1"/>
</dbReference>
<dbReference type="Gene3D" id="3.90.199.10">
    <property type="entry name" value="Topoisomerase II, domain 5"/>
    <property type="match status" value="1"/>
</dbReference>
<dbReference type="Gene3D" id="1.10.268.10">
    <property type="entry name" value="Topoisomerase, domain 3"/>
    <property type="match status" value="1"/>
</dbReference>
<dbReference type="InterPro" id="IPR050634">
    <property type="entry name" value="DNA_Topoisomerase_II"/>
</dbReference>
<dbReference type="InterPro" id="IPR012542">
    <property type="entry name" value="DTHCT"/>
</dbReference>
<dbReference type="InterPro" id="IPR036890">
    <property type="entry name" value="HATPase_C_sf"/>
</dbReference>
<dbReference type="InterPro" id="IPR020568">
    <property type="entry name" value="Ribosomal_Su5_D2-typ_SF"/>
</dbReference>
<dbReference type="InterPro" id="IPR014721">
    <property type="entry name" value="Ribsml_uS5_D2-typ_fold_subgr"/>
</dbReference>
<dbReference type="InterPro" id="IPR001241">
    <property type="entry name" value="Topo_IIA"/>
</dbReference>
<dbReference type="InterPro" id="IPR013760">
    <property type="entry name" value="Topo_IIA-like_dom_sf"/>
</dbReference>
<dbReference type="InterPro" id="IPR013758">
    <property type="entry name" value="Topo_IIA_A/C_ab"/>
</dbReference>
<dbReference type="InterPro" id="IPR013757">
    <property type="entry name" value="Topo_IIA_A_a_sf"/>
</dbReference>
<dbReference type="InterPro" id="IPR013759">
    <property type="entry name" value="Topo_IIA_B_C"/>
</dbReference>
<dbReference type="InterPro" id="IPR013506">
    <property type="entry name" value="Topo_IIA_bsu_dom2"/>
</dbReference>
<dbReference type="InterPro" id="IPR002205">
    <property type="entry name" value="Topo_IIA_dom_A"/>
</dbReference>
<dbReference type="InterPro" id="IPR001154">
    <property type="entry name" value="TopoII_euk"/>
</dbReference>
<dbReference type="InterPro" id="IPR018522">
    <property type="entry name" value="TopoIIA_CS"/>
</dbReference>
<dbReference type="InterPro" id="IPR031660">
    <property type="entry name" value="TOPRIM_C"/>
</dbReference>
<dbReference type="InterPro" id="IPR006171">
    <property type="entry name" value="TOPRIM_dom"/>
</dbReference>
<dbReference type="InterPro" id="IPR034157">
    <property type="entry name" value="TOPRIM_TopoII"/>
</dbReference>
<dbReference type="PANTHER" id="PTHR10169:SF36">
    <property type="entry name" value="DNA TOPOISOMERASE 2-BETA"/>
    <property type="match status" value="1"/>
</dbReference>
<dbReference type="PANTHER" id="PTHR10169">
    <property type="entry name" value="DNA TOPOISOMERASE/GYRASE"/>
    <property type="match status" value="1"/>
</dbReference>
<dbReference type="Pfam" id="PF00204">
    <property type="entry name" value="DNA_gyraseB"/>
    <property type="match status" value="1"/>
</dbReference>
<dbReference type="Pfam" id="PF00521">
    <property type="entry name" value="DNA_topoisoIV"/>
    <property type="match status" value="1"/>
</dbReference>
<dbReference type="Pfam" id="PF08070">
    <property type="entry name" value="DTHCT"/>
    <property type="match status" value="1"/>
</dbReference>
<dbReference type="Pfam" id="PF02518">
    <property type="entry name" value="HATPase_c"/>
    <property type="match status" value="1"/>
</dbReference>
<dbReference type="Pfam" id="PF01751">
    <property type="entry name" value="Toprim"/>
    <property type="match status" value="1"/>
</dbReference>
<dbReference type="Pfam" id="PF16898">
    <property type="entry name" value="TOPRIM_C"/>
    <property type="match status" value="1"/>
</dbReference>
<dbReference type="PRINTS" id="PR01158">
    <property type="entry name" value="TOPISMRASEII"/>
</dbReference>
<dbReference type="PRINTS" id="PR00418">
    <property type="entry name" value="TPI2FAMILY"/>
</dbReference>
<dbReference type="SMART" id="SM00433">
    <property type="entry name" value="TOP2c"/>
    <property type="match status" value="1"/>
</dbReference>
<dbReference type="SMART" id="SM00434">
    <property type="entry name" value="TOP4c"/>
    <property type="match status" value="1"/>
</dbReference>
<dbReference type="SUPFAM" id="SSF55874">
    <property type="entry name" value="ATPase domain of HSP90 chaperone/DNA topoisomerase II/histidine kinase"/>
    <property type="match status" value="1"/>
</dbReference>
<dbReference type="SUPFAM" id="SSF54211">
    <property type="entry name" value="Ribosomal protein S5 domain 2-like"/>
    <property type="match status" value="1"/>
</dbReference>
<dbReference type="SUPFAM" id="SSF56719">
    <property type="entry name" value="Type II DNA topoisomerase"/>
    <property type="match status" value="1"/>
</dbReference>
<dbReference type="PROSITE" id="PS52040">
    <property type="entry name" value="TOPO_IIA"/>
    <property type="match status" value="1"/>
</dbReference>
<dbReference type="PROSITE" id="PS00177">
    <property type="entry name" value="TOPOISOMERASE_II"/>
    <property type="match status" value="1"/>
</dbReference>
<dbReference type="PROSITE" id="PS50880">
    <property type="entry name" value="TOPRIM"/>
    <property type="match status" value="1"/>
</dbReference>
<organism>
    <name type="scientific">Cricetulus longicaudatus</name>
    <name type="common">Long-tailed dwarf hamster</name>
    <dbReference type="NCBI Taxonomy" id="10030"/>
    <lineage>
        <taxon>Eukaryota</taxon>
        <taxon>Metazoa</taxon>
        <taxon>Chordata</taxon>
        <taxon>Craniata</taxon>
        <taxon>Vertebrata</taxon>
        <taxon>Euteleostomi</taxon>
        <taxon>Mammalia</taxon>
        <taxon>Eutheria</taxon>
        <taxon>Euarchontoglires</taxon>
        <taxon>Glires</taxon>
        <taxon>Rodentia</taxon>
        <taxon>Myomorpha</taxon>
        <taxon>Muroidea</taxon>
        <taxon>Cricetidae</taxon>
        <taxon>Cricetinae</taxon>
        <taxon>Cricetulus</taxon>
    </lineage>
</organism>
<sequence length="1612" mass="182075">MAKSSLAGADGALTWVNNAAKKEELETSNKNDSSKKLSVERVYQKKTQLEHILLRPDTYIGSVEPLTQLMWVYDEDVGMNCREVTFVPGLYKIFDEILVNAADNKQRDKNMTCIKVSIDPESNIISIWNNGKGIPVVEHKVEKVYVPALIFGQLLTSSNYDDDEKKVTGGRNGYGAKLCNIFSTKFTVETACKEYKHSFKQTWMNNMMKTSEAKIKHFDGEDYTCITFQPDLAKFKMEKLDKDIVALMTRRAYDLAGSCKGVKVMFNGKKLPVNGFRSYVDLYVKDKLDETGVALKVIHELANERWDVCLTLSEKGFQQISFVNSIATTKGGRHVDYVVDQVVGKLIEVVKKKNKAGVSVKPFQVKNHIWVFINCLIENPTFDSQTKENMTLQPKSFGSKCQLSEKFFKAASNCGIVESILNWVKFKAQTQLNKKCSSVKYSKIKGIPKLDDANDAGGKHSLECTLILTEGDSAKSLAVSGLGVIGRDRYGVFPLRGKILNVREASHKQIMENAEINNIIKIVGLQYKKSYDDAESLKTLRYGKIMIMTDQDQDGSHIKGLLINFIHHNWPSLLKHGFLEEFITPIVKASKNKQELSFYSIPEFDEWKKHIENQKAWKIKYYKGLGTSTAKEAKEYFADMERHRILFRYAGPEDDAAITLAFSKKKIDDRKEWLTNFMEDRRQRRLHGLPEQFLYGTATKHLTYNDFINKELILFSNSDNERSIPSLVDGFKPGQRKVLFTCFKRNDKREVKVAQLAGSVAEMSAYHHGEQALMMTIVNLAQNFVGSNNINLLQPIGQFGTRLHGGKDAASPRYIFTMLSSLARLLFPAVDDNLLKFLYDDNQRVEPEWYIPIIPMVLINGAEGIGTGWACKLPNYDAREIVNNVRRMLDGLDPHPMLPNYKNFKGTIQELGQNQYAVSGEIFVVDRNTVEITELPVRTWTQVYKEQVLEPMLNGTDKTPALISDYKEYHTDTTVKFVVKMTEEKLAQAEAAGLHKVFKLQTTLTCNSMVLFDHMGCLKKYETVQDILKEFFDLRLSYYGLRKEWLVGMLGAESTKLNNQARFILEKIQGKITIENRSKKDLIQMLVQRGYESDPVRAWKEAQEKAAEEEDTQNQHDDSSSDSGTPSGPDFNYILNMSLWSLTKEKVEELIKQRDTKGREVNDLKRKSPSDLWKEDLAAFVEELDKVEAQEREDILAGMSGKAIKGKVGKPKVKKLQLEETMPSPYGRRIVPEITAMKADASRKLLKKKKGDPDTPVVKVEFDEEFSGTPVEGTGEETLTPSAPVNKGPKPKREKKEPGTRVRKTPTSAGKPNAKKVKKRNPWSDDESKSESDLEETEPVVIPRDSLLRRAAAERPKYTFDFSEEEEEDADDDDDNNDLEELKVKASPITNDGEDEFVPSDGLDKDEYAFSPGKSKATPEKSSHDKKSQDFGNLFSFPSYSQKSEDDSAKFDSNEEDTASVFTPSFGLKQTDKVPSKTVAAKKGKPPSDTAPKAKRAPKQKKVVETVNSDSDSEFGIPKKTTTPKGKGRGAKKRKASGSENEGDYNPGRKPSKTASKKPKKTSFDQDSDVDIFPSDFTSEPPALPRTGRARKEVKYFAESDEEEDVDFAMFN</sequence>
<protein>
    <recommendedName>
        <fullName>DNA topoisomerase 2-beta</fullName>
        <ecNumber evidence="4">5.6.2.2</ecNumber>
    </recommendedName>
    <alternativeName>
        <fullName>DNA topoisomerase II, beta isozyme</fullName>
    </alternativeName>
</protein>
<keyword id="KW-0007">Acetylation</keyword>
<keyword id="KW-0067">ATP-binding</keyword>
<keyword id="KW-0238">DNA-binding</keyword>
<keyword id="KW-0413">Isomerase</keyword>
<keyword id="KW-1017">Isopeptide bond</keyword>
<keyword id="KW-0460">Magnesium</keyword>
<keyword id="KW-0479">Metal-binding</keyword>
<keyword id="KW-0547">Nucleotide-binding</keyword>
<keyword id="KW-0539">Nucleus</keyword>
<keyword id="KW-0597">Phosphoprotein</keyword>
<keyword id="KW-0799">Topoisomerase</keyword>
<keyword id="KW-0832">Ubl conjugation</keyword>
<accession>Q64399</accession>
<evidence type="ECO:0000250" key="1"/>
<evidence type="ECO:0000250" key="2">
    <source>
        <dbReference type="UniProtKB" id="Q02880"/>
    </source>
</evidence>
<evidence type="ECO:0000250" key="3">
    <source>
        <dbReference type="UniProtKB" id="Q64511"/>
    </source>
</evidence>
<evidence type="ECO:0000255" key="4">
    <source>
        <dbReference type="PROSITE-ProRule" id="PRU00995"/>
    </source>
</evidence>
<evidence type="ECO:0000255" key="5">
    <source>
        <dbReference type="PROSITE-ProRule" id="PRU01384"/>
    </source>
</evidence>
<evidence type="ECO:0000256" key="6">
    <source>
        <dbReference type="SAM" id="MobiDB-lite"/>
    </source>
</evidence>
<evidence type="ECO:0000305" key="7"/>
<comment type="function">
    <text evidence="2">Key decatenating enzyme that alters DNA topology by binding to two double-stranded DNA molecules, generating a double-stranded break in one of the strands, passing the intact strand through the broken strand, and religating the broken strand.</text>
</comment>
<comment type="catalytic activity">
    <reaction evidence="4">
        <text>ATP-dependent breakage, passage and rejoining of double-stranded DNA.</text>
        <dbReference type="EC" id="5.6.2.2"/>
    </reaction>
</comment>
<comment type="cofactor">
    <cofactor evidence="4">
        <name>Mg(2+)</name>
        <dbReference type="ChEBI" id="CHEBI:18420"/>
    </cofactor>
    <cofactor evidence="4">
        <name>Mn(2+)</name>
        <dbReference type="ChEBI" id="CHEBI:29035"/>
    </cofactor>
    <cofactor evidence="4">
        <name>Ca(2+)</name>
        <dbReference type="ChEBI" id="CHEBI:29108"/>
    </cofactor>
    <text evidence="4">Binds two Mg(2+) per subunit. The magnesium ions form salt bridges with both the protein and the DNA. Can also accept other divalent metal cations, such as Mn(2+) or Ca(2+).</text>
</comment>
<comment type="subunit">
    <text evidence="2 3">Homodimer (By similarity). Interacts with PLSCR1 and KIAA1210 (By similarity).</text>
</comment>
<comment type="subcellular location">
    <subcellularLocation>
        <location evidence="2">Nucleus</location>
        <location evidence="2">Nucleolus</location>
    </subcellularLocation>
    <subcellularLocation>
        <location evidence="2">Nucleus</location>
        <location evidence="2">Nucleoplasm</location>
    </subcellularLocation>
    <subcellularLocation>
        <location evidence="2">Nucleus</location>
    </subcellularLocation>
</comment>
<comment type="miscellaneous">
    <text>Eukaryotic topoisomerase I and II can relax both negative and positive supercoils, whereas prokaryotic enzymes relax only negative supercoils.</text>
</comment>
<comment type="similarity">
    <text evidence="7">Belongs to the type II topoisomerase family.</text>
</comment>
<gene>
    <name type="primary">TOP2B</name>
</gene>
<name>TOP2B_CRILO</name>
<proteinExistence type="evidence at transcript level"/>